<evidence type="ECO:0000255" key="1">
    <source>
        <dbReference type="HAMAP-Rule" id="MF_00386"/>
    </source>
</evidence>
<comment type="function">
    <text evidence="1">Could be involved in insertion of integral membrane proteins into the membrane.</text>
</comment>
<comment type="subcellular location">
    <subcellularLocation>
        <location evidence="1">Cell inner membrane</location>
        <topology evidence="1">Peripheral membrane protein</topology>
        <orientation evidence="1">Cytoplasmic side</orientation>
    </subcellularLocation>
</comment>
<comment type="similarity">
    <text evidence="1">Belongs to the UPF0161 family.</text>
</comment>
<dbReference type="EMBL" id="CP000083">
    <property type="protein sequence ID" value="AAZ26144.1"/>
    <property type="molecule type" value="Genomic_DNA"/>
</dbReference>
<dbReference type="STRING" id="167879.CPS_5051"/>
<dbReference type="KEGG" id="cps:CPS_5051"/>
<dbReference type="eggNOG" id="COG0759">
    <property type="taxonomic scope" value="Bacteria"/>
</dbReference>
<dbReference type="HOGENOM" id="CLU_144811_5_2_6"/>
<dbReference type="Proteomes" id="UP000000547">
    <property type="component" value="Chromosome"/>
</dbReference>
<dbReference type="GO" id="GO:0005886">
    <property type="term" value="C:plasma membrane"/>
    <property type="evidence" value="ECO:0007669"/>
    <property type="project" value="UniProtKB-SubCell"/>
</dbReference>
<dbReference type="HAMAP" id="MF_00386">
    <property type="entry name" value="UPF0161_YidD"/>
    <property type="match status" value="1"/>
</dbReference>
<dbReference type="InterPro" id="IPR002696">
    <property type="entry name" value="Membr_insert_effic_factor_YidD"/>
</dbReference>
<dbReference type="NCBIfam" id="TIGR00278">
    <property type="entry name" value="membrane protein insertion efficiency factor YidD"/>
    <property type="match status" value="1"/>
</dbReference>
<dbReference type="PANTHER" id="PTHR33383">
    <property type="entry name" value="MEMBRANE PROTEIN INSERTION EFFICIENCY FACTOR-RELATED"/>
    <property type="match status" value="1"/>
</dbReference>
<dbReference type="PANTHER" id="PTHR33383:SF1">
    <property type="entry name" value="MEMBRANE PROTEIN INSERTION EFFICIENCY FACTOR-RELATED"/>
    <property type="match status" value="1"/>
</dbReference>
<dbReference type="Pfam" id="PF01809">
    <property type="entry name" value="YidD"/>
    <property type="match status" value="1"/>
</dbReference>
<dbReference type="SMART" id="SM01234">
    <property type="entry name" value="Haemolytic"/>
    <property type="match status" value="1"/>
</dbReference>
<accession>Q47U34</accession>
<proteinExistence type="inferred from homology"/>
<protein>
    <recommendedName>
        <fullName evidence="1">Putative membrane protein insertion efficiency factor</fullName>
    </recommendedName>
</protein>
<name>YIDD_COLP3</name>
<keyword id="KW-0997">Cell inner membrane</keyword>
<keyword id="KW-1003">Cell membrane</keyword>
<keyword id="KW-0472">Membrane</keyword>
<sequence>MAKNNSTPQKLVITGIKGYQRFISPLLGSNCRFTPSCSAYATEAINRFGVIKGGWLASKRILRCHPLNDGGEDPVPPIKKSK</sequence>
<reference key="1">
    <citation type="journal article" date="2005" name="Proc. Natl. Acad. Sci. U.S.A.">
        <title>The psychrophilic lifestyle as revealed by the genome sequence of Colwellia psychrerythraea 34H through genomic and proteomic analyses.</title>
        <authorList>
            <person name="Methe B.A."/>
            <person name="Nelson K.E."/>
            <person name="Deming J.W."/>
            <person name="Momen B."/>
            <person name="Melamud E."/>
            <person name="Zhang X."/>
            <person name="Moult J."/>
            <person name="Madupu R."/>
            <person name="Nelson W.C."/>
            <person name="Dodson R.J."/>
            <person name="Brinkac L.M."/>
            <person name="Daugherty S.C."/>
            <person name="Durkin A.S."/>
            <person name="DeBoy R.T."/>
            <person name="Kolonay J.F."/>
            <person name="Sullivan S.A."/>
            <person name="Zhou L."/>
            <person name="Davidsen T.M."/>
            <person name="Wu M."/>
            <person name="Huston A.L."/>
            <person name="Lewis M."/>
            <person name="Weaver B."/>
            <person name="Weidman J.F."/>
            <person name="Khouri H."/>
            <person name="Utterback T.R."/>
            <person name="Feldblyum T.V."/>
            <person name="Fraser C.M."/>
        </authorList>
    </citation>
    <scope>NUCLEOTIDE SEQUENCE [LARGE SCALE GENOMIC DNA]</scope>
    <source>
        <strain>34H / ATCC BAA-681</strain>
    </source>
</reference>
<organism>
    <name type="scientific">Colwellia psychrerythraea (strain 34H / ATCC BAA-681)</name>
    <name type="common">Vibrio psychroerythus</name>
    <dbReference type="NCBI Taxonomy" id="167879"/>
    <lineage>
        <taxon>Bacteria</taxon>
        <taxon>Pseudomonadati</taxon>
        <taxon>Pseudomonadota</taxon>
        <taxon>Gammaproteobacteria</taxon>
        <taxon>Alteromonadales</taxon>
        <taxon>Colwelliaceae</taxon>
        <taxon>Colwellia</taxon>
    </lineage>
</organism>
<gene>
    <name type="ordered locus">CPS_5051</name>
</gene>
<feature type="chain" id="PRO_0000253100" description="Putative membrane protein insertion efficiency factor">
    <location>
        <begin position="1"/>
        <end position="82"/>
    </location>
</feature>